<feature type="chain" id="PRO_1000089065" description="Argininosuccinate lyase">
    <location>
        <begin position="1"/>
        <end position="467"/>
    </location>
</feature>
<organism>
    <name type="scientific">Anaeromyxobacter sp. (strain K)</name>
    <dbReference type="NCBI Taxonomy" id="447217"/>
    <lineage>
        <taxon>Bacteria</taxon>
        <taxon>Pseudomonadati</taxon>
        <taxon>Myxococcota</taxon>
        <taxon>Myxococcia</taxon>
        <taxon>Myxococcales</taxon>
        <taxon>Cystobacterineae</taxon>
        <taxon>Anaeromyxobacteraceae</taxon>
        <taxon>Anaeromyxobacter</taxon>
    </lineage>
</organism>
<protein>
    <recommendedName>
        <fullName evidence="1">Argininosuccinate lyase</fullName>
        <shortName evidence="1">ASAL</shortName>
        <ecNumber evidence="1">4.3.2.1</ecNumber>
    </recommendedName>
    <alternativeName>
        <fullName evidence="1">Arginosuccinase</fullName>
    </alternativeName>
</protein>
<reference key="1">
    <citation type="submission" date="2008-08" db="EMBL/GenBank/DDBJ databases">
        <title>Complete sequence of Anaeromyxobacter sp. K.</title>
        <authorList>
            <consortium name="US DOE Joint Genome Institute"/>
            <person name="Lucas S."/>
            <person name="Copeland A."/>
            <person name="Lapidus A."/>
            <person name="Glavina del Rio T."/>
            <person name="Dalin E."/>
            <person name="Tice H."/>
            <person name="Bruce D."/>
            <person name="Goodwin L."/>
            <person name="Pitluck S."/>
            <person name="Saunders E."/>
            <person name="Brettin T."/>
            <person name="Detter J.C."/>
            <person name="Han C."/>
            <person name="Larimer F."/>
            <person name="Land M."/>
            <person name="Hauser L."/>
            <person name="Kyrpides N."/>
            <person name="Ovchinnikiva G."/>
            <person name="Beliaev A."/>
        </authorList>
    </citation>
    <scope>NUCLEOTIDE SEQUENCE [LARGE SCALE GENOMIC DNA]</scope>
    <source>
        <strain>K</strain>
    </source>
</reference>
<evidence type="ECO:0000255" key="1">
    <source>
        <dbReference type="HAMAP-Rule" id="MF_00006"/>
    </source>
</evidence>
<name>ARLY_ANASK</name>
<proteinExistence type="inferred from homology"/>
<dbReference type="EC" id="4.3.2.1" evidence="1"/>
<dbReference type="EMBL" id="CP001131">
    <property type="protein sequence ID" value="ACG75398.1"/>
    <property type="molecule type" value="Genomic_DNA"/>
</dbReference>
<dbReference type="RefSeq" id="WP_012528151.1">
    <property type="nucleotide sequence ID" value="NC_011145.1"/>
</dbReference>
<dbReference type="SMR" id="B4UHY4"/>
<dbReference type="KEGG" id="ank:AnaeK_4195"/>
<dbReference type="HOGENOM" id="CLU_027272_2_3_7"/>
<dbReference type="OrthoDB" id="9769623at2"/>
<dbReference type="UniPathway" id="UPA00068">
    <property type="reaction ID" value="UER00114"/>
</dbReference>
<dbReference type="Proteomes" id="UP000001871">
    <property type="component" value="Chromosome"/>
</dbReference>
<dbReference type="GO" id="GO:0005829">
    <property type="term" value="C:cytosol"/>
    <property type="evidence" value="ECO:0007669"/>
    <property type="project" value="TreeGrafter"/>
</dbReference>
<dbReference type="GO" id="GO:0004056">
    <property type="term" value="F:argininosuccinate lyase activity"/>
    <property type="evidence" value="ECO:0007669"/>
    <property type="project" value="UniProtKB-UniRule"/>
</dbReference>
<dbReference type="GO" id="GO:0042450">
    <property type="term" value="P:arginine biosynthetic process via ornithine"/>
    <property type="evidence" value="ECO:0007669"/>
    <property type="project" value="InterPro"/>
</dbReference>
<dbReference type="GO" id="GO:0006526">
    <property type="term" value="P:L-arginine biosynthetic process"/>
    <property type="evidence" value="ECO:0007669"/>
    <property type="project" value="UniProtKB-UniRule"/>
</dbReference>
<dbReference type="CDD" id="cd01359">
    <property type="entry name" value="Argininosuccinate_lyase"/>
    <property type="match status" value="1"/>
</dbReference>
<dbReference type="FunFam" id="1.10.40.30:FF:000001">
    <property type="entry name" value="Argininosuccinate lyase"/>
    <property type="match status" value="1"/>
</dbReference>
<dbReference type="FunFam" id="1.20.200.10:FF:000015">
    <property type="entry name" value="argininosuccinate lyase isoform X2"/>
    <property type="match status" value="1"/>
</dbReference>
<dbReference type="Gene3D" id="1.10.40.30">
    <property type="entry name" value="Fumarase/aspartase (C-terminal domain)"/>
    <property type="match status" value="1"/>
</dbReference>
<dbReference type="Gene3D" id="1.20.200.10">
    <property type="entry name" value="Fumarase/aspartase (Central domain)"/>
    <property type="match status" value="1"/>
</dbReference>
<dbReference type="Gene3D" id="1.10.275.10">
    <property type="entry name" value="Fumarase/aspartase (N-terminal domain)"/>
    <property type="match status" value="1"/>
</dbReference>
<dbReference type="HAMAP" id="MF_00006">
    <property type="entry name" value="Arg_succ_lyase"/>
    <property type="match status" value="1"/>
</dbReference>
<dbReference type="InterPro" id="IPR029419">
    <property type="entry name" value="Arg_succ_lyase_C"/>
</dbReference>
<dbReference type="InterPro" id="IPR009049">
    <property type="entry name" value="Argininosuccinate_lyase"/>
</dbReference>
<dbReference type="InterPro" id="IPR024083">
    <property type="entry name" value="Fumarase/histidase_N"/>
</dbReference>
<dbReference type="InterPro" id="IPR020557">
    <property type="entry name" value="Fumarate_lyase_CS"/>
</dbReference>
<dbReference type="InterPro" id="IPR000362">
    <property type="entry name" value="Fumarate_lyase_fam"/>
</dbReference>
<dbReference type="InterPro" id="IPR022761">
    <property type="entry name" value="Fumarate_lyase_N"/>
</dbReference>
<dbReference type="InterPro" id="IPR008948">
    <property type="entry name" value="L-Aspartase-like"/>
</dbReference>
<dbReference type="NCBIfam" id="TIGR00838">
    <property type="entry name" value="argH"/>
    <property type="match status" value="1"/>
</dbReference>
<dbReference type="PANTHER" id="PTHR43814">
    <property type="entry name" value="ARGININOSUCCINATE LYASE"/>
    <property type="match status" value="1"/>
</dbReference>
<dbReference type="PANTHER" id="PTHR43814:SF1">
    <property type="entry name" value="ARGININOSUCCINATE LYASE"/>
    <property type="match status" value="1"/>
</dbReference>
<dbReference type="Pfam" id="PF14698">
    <property type="entry name" value="ASL_C2"/>
    <property type="match status" value="1"/>
</dbReference>
<dbReference type="Pfam" id="PF00206">
    <property type="entry name" value="Lyase_1"/>
    <property type="match status" value="1"/>
</dbReference>
<dbReference type="PRINTS" id="PR00145">
    <property type="entry name" value="ARGSUCLYASE"/>
</dbReference>
<dbReference type="PRINTS" id="PR00149">
    <property type="entry name" value="FUMRATELYASE"/>
</dbReference>
<dbReference type="SUPFAM" id="SSF48557">
    <property type="entry name" value="L-aspartase-like"/>
    <property type="match status" value="1"/>
</dbReference>
<dbReference type="PROSITE" id="PS00163">
    <property type="entry name" value="FUMARATE_LYASES"/>
    <property type="match status" value="1"/>
</dbReference>
<gene>
    <name evidence="1" type="primary">argH</name>
    <name type="ordered locus">AnaeK_4195</name>
</gene>
<accession>B4UHY4</accession>
<sequence length="467" mass="50344">MRANSKAKPVSRAALAGEADPRLVALSVSIQDDGALYAEDIRGSQAHVSMLAAQGIVPKAAARRIVAALDQVRAEFAAGKIRFDPALEDVHTHVERRLGELVGKDAGYLHAGRSRNDQVALDERLFIVGACDRCDAALERLQRAFLGQARAHERTILPGYTHLQRAQPVSLAHHLLAYVEMFGRDRERFAEVRRRAAISPLGSGALAGTTLPLDREAVAARLGLAGVTHNSLDAVSDRDSAAELLFACALAAVHLSRIGEELVLWTTKEFGFATLSDAFATGSSLMPQKKNPDVGELARGRAGRALGDLVALLAILKGLPLSYNRDLQEDKRPLLGGPEALVLTADAVAGAVETATFHAARMEEALGSGEALATDAAEYLVDRGVPFREAHEAVGKAAAFSAREGRPMARLTAAEWATFHRRFEKDVLRCFDARRSLRRRELPGAPGPRAVRAELRRWEKALGKARG</sequence>
<keyword id="KW-0028">Amino-acid biosynthesis</keyword>
<keyword id="KW-0055">Arginine biosynthesis</keyword>
<keyword id="KW-0963">Cytoplasm</keyword>
<keyword id="KW-0456">Lyase</keyword>
<comment type="catalytic activity">
    <reaction evidence="1">
        <text>2-(N(omega)-L-arginino)succinate = fumarate + L-arginine</text>
        <dbReference type="Rhea" id="RHEA:24020"/>
        <dbReference type="ChEBI" id="CHEBI:29806"/>
        <dbReference type="ChEBI" id="CHEBI:32682"/>
        <dbReference type="ChEBI" id="CHEBI:57472"/>
        <dbReference type="EC" id="4.3.2.1"/>
    </reaction>
</comment>
<comment type="pathway">
    <text evidence="1">Amino-acid biosynthesis; L-arginine biosynthesis; L-arginine from L-ornithine and carbamoyl phosphate: step 3/3.</text>
</comment>
<comment type="subcellular location">
    <subcellularLocation>
        <location evidence="1">Cytoplasm</location>
    </subcellularLocation>
</comment>
<comment type="similarity">
    <text evidence="1">Belongs to the lyase 1 family. Argininosuccinate lyase subfamily.</text>
</comment>